<proteinExistence type="inferred from homology"/>
<feature type="chain" id="PRO_1000137955" description="Bifunctional polymyxin resistance protein ArnA">
    <location>
        <begin position="1"/>
        <end position="667"/>
    </location>
</feature>
<feature type="region of interest" description="Formyltransferase ArnAFT">
    <location>
        <begin position="1"/>
        <end position="304"/>
    </location>
</feature>
<feature type="region of interest" description="Dehydrogenase ArnADH">
    <location>
        <begin position="314"/>
        <end position="667"/>
    </location>
</feature>
<feature type="active site" description="Proton donor; for formyltransferase activity" evidence="1">
    <location>
        <position position="104"/>
    </location>
</feature>
<feature type="active site" description="Proton acceptor; for decarboxylase activity" evidence="1">
    <location>
        <position position="434"/>
    </location>
</feature>
<feature type="active site" description="Proton donor; for decarboxylase activity" evidence="1">
    <location>
        <position position="619"/>
    </location>
</feature>
<feature type="binding site" evidence="1">
    <location>
        <position position="114"/>
    </location>
    <ligand>
        <name>(6R)-10-formyltetrahydrofolate</name>
        <dbReference type="ChEBI" id="CHEBI:195366"/>
    </ligand>
</feature>
<feature type="binding site" evidence="1">
    <location>
        <begin position="136"/>
        <end position="140"/>
    </location>
    <ligand>
        <name>(6R)-10-formyltetrahydrofolate</name>
        <dbReference type="ChEBI" id="CHEBI:195366"/>
    </ligand>
</feature>
<feature type="binding site" evidence="1">
    <location>
        <position position="347"/>
    </location>
    <ligand>
        <name>NAD(+)</name>
        <dbReference type="ChEBI" id="CHEBI:57540"/>
    </ligand>
</feature>
<feature type="binding site" evidence="1">
    <location>
        <begin position="368"/>
        <end position="369"/>
    </location>
    <ligand>
        <name>NAD(+)</name>
        <dbReference type="ChEBI" id="CHEBI:57540"/>
    </ligand>
</feature>
<feature type="binding site" evidence="1">
    <location>
        <position position="393"/>
    </location>
    <ligand>
        <name>UDP-alpha-D-glucuronate</name>
        <dbReference type="ChEBI" id="CHEBI:58052"/>
    </ligand>
</feature>
<feature type="binding site" evidence="1">
    <location>
        <position position="398"/>
    </location>
    <ligand>
        <name>UDP-alpha-D-glucuronate</name>
        <dbReference type="ChEBI" id="CHEBI:58052"/>
    </ligand>
</feature>
<feature type="binding site" evidence="1">
    <location>
        <begin position="432"/>
        <end position="433"/>
    </location>
    <ligand>
        <name>UDP-alpha-D-glucuronate</name>
        <dbReference type="ChEBI" id="CHEBI:58052"/>
    </ligand>
</feature>
<feature type="binding site" evidence="1">
    <location>
        <position position="460"/>
    </location>
    <ligand>
        <name>UDP-alpha-D-glucuronate</name>
        <dbReference type="ChEBI" id="CHEBI:58052"/>
    </ligand>
</feature>
<feature type="binding site" evidence="1">
    <location>
        <position position="492"/>
    </location>
    <ligand>
        <name>UDP-alpha-D-glucuronate</name>
        <dbReference type="ChEBI" id="CHEBI:58052"/>
    </ligand>
</feature>
<feature type="binding site" evidence="1">
    <location>
        <begin position="526"/>
        <end position="535"/>
    </location>
    <ligand>
        <name>UDP-alpha-D-glucuronate</name>
        <dbReference type="ChEBI" id="CHEBI:58052"/>
    </ligand>
</feature>
<feature type="binding site" evidence="1">
    <location>
        <position position="613"/>
    </location>
    <ligand>
        <name>UDP-alpha-D-glucuronate</name>
        <dbReference type="ChEBI" id="CHEBI:58052"/>
    </ligand>
</feature>
<feature type="site" description="Transition state stabilizer" evidence="1">
    <location>
        <position position="102"/>
    </location>
</feature>
<feature type="site" description="Raises pKa of active site His" evidence="1">
    <location>
        <position position="140"/>
    </location>
</feature>
<evidence type="ECO:0000255" key="1">
    <source>
        <dbReference type="HAMAP-Rule" id="MF_01166"/>
    </source>
</evidence>
<dbReference type="EC" id="2.1.2.13" evidence="1"/>
<dbReference type="EC" id="1.1.1.305" evidence="1"/>
<dbReference type="EMBL" id="CP000950">
    <property type="protein sequence ID" value="ACA68124.1"/>
    <property type="molecule type" value="Genomic_DNA"/>
</dbReference>
<dbReference type="RefSeq" id="WP_012304017.1">
    <property type="nucleotide sequence ID" value="NZ_CP009792.1"/>
</dbReference>
<dbReference type="SMR" id="B1JJ30"/>
<dbReference type="KEGG" id="ypy:YPK_1833"/>
<dbReference type="PATRIC" id="fig|502800.11.peg.2502"/>
<dbReference type="UniPathway" id="UPA00030"/>
<dbReference type="UniPathway" id="UPA00032">
    <property type="reaction ID" value="UER00492"/>
</dbReference>
<dbReference type="UniPathway" id="UPA00032">
    <property type="reaction ID" value="UER00494"/>
</dbReference>
<dbReference type="GO" id="GO:0016020">
    <property type="term" value="C:membrane"/>
    <property type="evidence" value="ECO:0007669"/>
    <property type="project" value="GOC"/>
</dbReference>
<dbReference type="GO" id="GO:0016831">
    <property type="term" value="F:carboxy-lyase activity"/>
    <property type="evidence" value="ECO:0007669"/>
    <property type="project" value="InterPro"/>
</dbReference>
<dbReference type="GO" id="GO:0099619">
    <property type="term" value="F:UDP-4-amino-4-deoxy-L-arabinose formyltransferase activity"/>
    <property type="evidence" value="ECO:0007669"/>
    <property type="project" value="UniProtKB-EC"/>
</dbReference>
<dbReference type="GO" id="GO:0099618">
    <property type="term" value="F:UDP-glucuronate dehydrogenase activity"/>
    <property type="evidence" value="ECO:0007669"/>
    <property type="project" value="UniProtKB-EC"/>
</dbReference>
<dbReference type="GO" id="GO:0009245">
    <property type="term" value="P:lipid A biosynthetic process"/>
    <property type="evidence" value="ECO:0007669"/>
    <property type="project" value="UniProtKB-KW"/>
</dbReference>
<dbReference type="GO" id="GO:0009103">
    <property type="term" value="P:lipopolysaccharide biosynthetic process"/>
    <property type="evidence" value="ECO:0007669"/>
    <property type="project" value="UniProtKB-UniRule"/>
</dbReference>
<dbReference type="GO" id="GO:0046677">
    <property type="term" value="P:response to antibiotic"/>
    <property type="evidence" value="ECO:0007669"/>
    <property type="project" value="UniProtKB-KW"/>
</dbReference>
<dbReference type="CDD" id="cd08702">
    <property type="entry name" value="Arna_FMT_C"/>
    <property type="match status" value="1"/>
</dbReference>
<dbReference type="CDD" id="cd05257">
    <property type="entry name" value="Arna_like_SDR_e"/>
    <property type="match status" value="1"/>
</dbReference>
<dbReference type="FunFam" id="3.40.50.720:FF:000197">
    <property type="entry name" value="Bifunctional polymyxin resistance protein ArnA"/>
    <property type="match status" value="1"/>
</dbReference>
<dbReference type="Gene3D" id="3.40.50.12230">
    <property type="match status" value="1"/>
</dbReference>
<dbReference type="Gene3D" id="3.40.50.720">
    <property type="entry name" value="NAD(P)-binding Rossmann-like Domain"/>
    <property type="match status" value="1"/>
</dbReference>
<dbReference type="HAMAP" id="MF_01166">
    <property type="entry name" value="ArnA"/>
    <property type="match status" value="1"/>
</dbReference>
<dbReference type="InterPro" id="IPR045869">
    <property type="entry name" value="Arna-like_SDR_e"/>
</dbReference>
<dbReference type="InterPro" id="IPR021168">
    <property type="entry name" value="Bifun_polymyxin_resist_ArnA"/>
</dbReference>
<dbReference type="InterPro" id="IPR001509">
    <property type="entry name" value="Epimerase_deHydtase"/>
</dbReference>
<dbReference type="InterPro" id="IPR005793">
    <property type="entry name" value="Formyl_trans_C"/>
</dbReference>
<dbReference type="InterPro" id="IPR002376">
    <property type="entry name" value="Formyl_transf_N"/>
</dbReference>
<dbReference type="InterPro" id="IPR036477">
    <property type="entry name" value="Formyl_transf_N_sf"/>
</dbReference>
<dbReference type="InterPro" id="IPR011034">
    <property type="entry name" value="Formyl_transferase-like_C_sf"/>
</dbReference>
<dbReference type="InterPro" id="IPR050177">
    <property type="entry name" value="Lipid_A_modif_metabolic_enz"/>
</dbReference>
<dbReference type="InterPro" id="IPR036291">
    <property type="entry name" value="NAD(P)-bd_dom_sf"/>
</dbReference>
<dbReference type="NCBIfam" id="NF005414">
    <property type="entry name" value="PRK06988.1"/>
    <property type="match status" value="1"/>
</dbReference>
<dbReference type="NCBIfam" id="NF005998">
    <property type="entry name" value="PRK08125.1"/>
    <property type="match status" value="1"/>
</dbReference>
<dbReference type="NCBIfam" id="NF008872">
    <property type="entry name" value="PRK11908.1"/>
    <property type="match status" value="1"/>
</dbReference>
<dbReference type="PANTHER" id="PTHR43245">
    <property type="entry name" value="BIFUNCTIONAL POLYMYXIN RESISTANCE PROTEIN ARNA"/>
    <property type="match status" value="1"/>
</dbReference>
<dbReference type="PANTHER" id="PTHR43245:SF13">
    <property type="entry name" value="UDP-D-APIOSE_UDP-D-XYLOSE SYNTHASE 2"/>
    <property type="match status" value="1"/>
</dbReference>
<dbReference type="Pfam" id="PF01370">
    <property type="entry name" value="Epimerase"/>
    <property type="match status" value="1"/>
</dbReference>
<dbReference type="Pfam" id="PF02911">
    <property type="entry name" value="Formyl_trans_C"/>
    <property type="match status" value="1"/>
</dbReference>
<dbReference type="Pfam" id="PF00551">
    <property type="entry name" value="Formyl_trans_N"/>
    <property type="match status" value="1"/>
</dbReference>
<dbReference type="PIRSF" id="PIRSF036506">
    <property type="entry name" value="Bifun_polymyxin_resist_ArnA"/>
    <property type="match status" value="1"/>
</dbReference>
<dbReference type="SUPFAM" id="SSF50486">
    <property type="entry name" value="FMT C-terminal domain-like"/>
    <property type="match status" value="1"/>
</dbReference>
<dbReference type="SUPFAM" id="SSF53328">
    <property type="entry name" value="Formyltransferase"/>
    <property type="match status" value="1"/>
</dbReference>
<dbReference type="SUPFAM" id="SSF51735">
    <property type="entry name" value="NAD(P)-binding Rossmann-fold domains"/>
    <property type="match status" value="1"/>
</dbReference>
<accession>B1JJ30</accession>
<reference key="1">
    <citation type="submission" date="2008-02" db="EMBL/GenBank/DDBJ databases">
        <title>Complete sequence of Yersinia pseudotuberculosis YPIII.</title>
        <authorList>
            <consortium name="US DOE Joint Genome Institute"/>
            <person name="Copeland A."/>
            <person name="Lucas S."/>
            <person name="Lapidus A."/>
            <person name="Glavina del Rio T."/>
            <person name="Dalin E."/>
            <person name="Tice H."/>
            <person name="Bruce D."/>
            <person name="Goodwin L."/>
            <person name="Pitluck S."/>
            <person name="Munk A.C."/>
            <person name="Brettin T."/>
            <person name="Detter J.C."/>
            <person name="Han C."/>
            <person name="Tapia R."/>
            <person name="Schmutz J."/>
            <person name="Larimer F."/>
            <person name="Land M."/>
            <person name="Hauser L."/>
            <person name="Challacombe J.F."/>
            <person name="Green L."/>
            <person name="Lindler L.E."/>
            <person name="Nikolich M.P."/>
            <person name="Richardson P."/>
        </authorList>
    </citation>
    <scope>NUCLEOTIDE SEQUENCE [LARGE SCALE GENOMIC DNA]</scope>
    <source>
        <strain>YPIII</strain>
    </source>
</reference>
<name>ARNA_YERPY</name>
<protein>
    <recommendedName>
        <fullName evidence="1">Bifunctional polymyxin resistance protein ArnA</fullName>
    </recommendedName>
    <domain>
        <recommendedName>
            <fullName evidence="1">UDP-4-amino-4-deoxy-L-arabinose formyltransferase</fullName>
            <ecNumber evidence="1">2.1.2.13</ecNumber>
        </recommendedName>
        <alternativeName>
            <fullName evidence="1">ArnAFT</fullName>
        </alternativeName>
        <alternativeName>
            <fullName evidence="1">UDP-L-Ara4N formyltransferase</fullName>
        </alternativeName>
    </domain>
    <domain>
        <recommendedName>
            <fullName evidence="1">UDP-glucuronic acid oxidase, UDP-4-keto-hexauronic acid decarboxylating</fullName>
            <ecNumber evidence="1">1.1.1.305</ecNumber>
        </recommendedName>
        <alternativeName>
            <fullName evidence="1">ArnADH</fullName>
        </alternativeName>
        <alternativeName>
            <fullName evidence="1">UDP-GlcUA decarboxylase</fullName>
        </alternativeName>
        <alternativeName>
            <fullName evidence="1">UDP-glucuronic acid dehydrogenase</fullName>
        </alternativeName>
    </domain>
</protein>
<organism>
    <name type="scientific">Yersinia pseudotuberculosis serotype O:3 (strain YPIII)</name>
    <dbReference type="NCBI Taxonomy" id="502800"/>
    <lineage>
        <taxon>Bacteria</taxon>
        <taxon>Pseudomonadati</taxon>
        <taxon>Pseudomonadota</taxon>
        <taxon>Gammaproteobacteria</taxon>
        <taxon>Enterobacterales</taxon>
        <taxon>Yersiniaceae</taxon>
        <taxon>Yersinia</taxon>
    </lineage>
</organism>
<keyword id="KW-0046">Antibiotic resistance</keyword>
<keyword id="KW-0441">Lipid A biosynthesis</keyword>
<keyword id="KW-0444">Lipid biosynthesis</keyword>
<keyword id="KW-0443">Lipid metabolism</keyword>
<keyword id="KW-0448">Lipopolysaccharide biosynthesis</keyword>
<keyword id="KW-0511">Multifunctional enzyme</keyword>
<keyword id="KW-0520">NAD</keyword>
<keyword id="KW-0560">Oxidoreductase</keyword>
<keyword id="KW-0808">Transferase</keyword>
<comment type="function">
    <text evidence="1">Bifunctional enzyme that catalyzes the oxidative decarboxylation of UDP-glucuronic acid (UDP-GlcUA) to UDP-4-keto-arabinose (UDP-Ara4O) and the addition of a formyl group to UDP-4-amino-4-deoxy-L-arabinose (UDP-L-Ara4N) to form UDP-L-4-formamido-arabinose (UDP-L-Ara4FN). The modified arabinose is attached to lipid A and is required for resistance to polymyxin and cationic antimicrobial peptides.</text>
</comment>
<comment type="catalytic activity">
    <reaction evidence="1">
        <text>UDP-alpha-D-glucuronate + NAD(+) = UDP-beta-L-threo-pentopyranos-4-ulose + CO2 + NADH</text>
        <dbReference type="Rhea" id="RHEA:24702"/>
        <dbReference type="ChEBI" id="CHEBI:16526"/>
        <dbReference type="ChEBI" id="CHEBI:57540"/>
        <dbReference type="ChEBI" id="CHEBI:57945"/>
        <dbReference type="ChEBI" id="CHEBI:58052"/>
        <dbReference type="ChEBI" id="CHEBI:58710"/>
        <dbReference type="EC" id="1.1.1.305"/>
    </reaction>
</comment>
<comment type="catalytic activity">
    <reaction evidence="1">
        <text>UDP-4-amino-4-deoxy-beta-L-arabinose + (6R)-10-formyltetrahydrofolate = UDP-4-deoxy-4-formamido-beta-L-arabinose + (6S)-5,6,7,8-tetrahydrofolate + H(+)</text>
        <dbReference type="Rhea" id="RHEA:24706"/>
        <dbReference type="ChEBI" id="CHEBI:15378"/>
        <dbReference type="ChEBI" id="CHEBI:57453"/>
        <dbReference type="ChEBI" id="CHEBI:58708"/>
        <dbReference type="ChEBI" id="CHEBI:58709"/>
        <dbReference type="ChEBI" id="CHEBI:195366"/>
        <dbReference type="EC" id="2.1.2.13"/>
    </reaction>
</comment>
<comment type="pathway">
    <text evidence="1">Nucleotide-sugar biosynthesis; UDP-4-deoxy-4-formamido-beta-L-arabinose biosynthesis; UDP-4-deoxy-4-formamido-beta-L-arabinose from UDP-alpha-D-glucuronate: step 1/3.</text>
</comment>
<comment type="pathway">
    <text evidence="1">Nucleotide-sugar biosynthesis; UDP-4-deoxy-4-formamido-beta-L-arabinose biosynthesis; UDP-4-deoxy-4-formamido-beta-L-arabinose from UDP-alpha-D-glucuronate: step 3/3.</text>
</comment>
<comment type="pathway">
    <text evidence="1">Bacterial outer membrane biogenesis; lipopolysaccharide biosynthesis.</text>
</comment>
<comment type="subunit">
    <text evidence="1">Homohexamer, formed by a dimer of trimers.</text>
</comment>
<comment type="similarity">
    <text evidence="1">In the N-terminal section; belongs to the Fmt family. UDP-L-Ara4N formyltransferase subfamily.</text>
</comment>
<comment type="similarity">
    <text evidence="1">In the C-terminal section; belongs to the NAD(P)-dependent epimerase/dehydratase family. UDP-glucuronic acid decarboxylase subfamily.</text>
</comment>
<sequence>MKAIVFAYHDIGCVGLNALAEAGYDIQAVFTHTDNPGENRFFSSVARVAADLALPVFAPEDVNHPLWVERIRELQPDIIFSFYYRNMLSDEILSLAPQGGFNLHGSLLPQYRGRAPINWVLVNGETETGVTLHQMVKKADAGPIAGQYKVAISDVDTALTLHAKMRDAAQELLRNLLPRMKEGPLPLTPQKEADASYFGRRTAADGEIHWQKSAFTINNLVRAVTEPYPGAFSYLGQRKLTIWRSRPLDLVHNKLPGTVLSTAPLTVACGEGALEIITGKGEAGLYVQGDRLAQEMGIVTDVRLGNKPSNTLKRRTRVLILGVNGFIGNHLTERLLQDDRYEVYGLDIGSDAISRFLGNPAFHFVEGDISIHSEWIEYHIKKCDVILPLVAIATPIEYTRNPLRVFELDFEENLKIVRDCVKYNKRIVFPSTSEVYGMCDDKEFDEDTSRLIVGPINKQRWIYSVSKQLLDRVIWAYGVKEGLKFTLFRPFNWMGPRLDNLDAARIGSSRAITQLILNLVEGSPIKLVDGGAQKRCFTDIHDGIEALFRIIENRDGCCDGQIINIGNPTNEASIRELAEMLLTSFENHELRDHFPPFAGFKDIESSAYYGKGYQDVEYRTPSIKNARRILHWQPEIAMQQTVTETLDFFLRAAVIEKTAAPKDELNA</sequence>
<gene>
    <name evidence="1" type="primary">arnA</name>
    <name type="ordered locus">YPK_1833</name>
</gene>